<protein>
    <recommendedName>
        <fullName evidence="1">Ribosomal RNA small subunit methyltransferase G</fullName>
        <ecNumber evidence="1">2.1.1.170</ecNumber>
    </recommendedName>
    <alternativeName>
        <fullName evidence="1">16S rRNA 7-methylguanosine methyltransferase</fullName>
        <shortName evidence="1">16S rRNA m7G methyltransferase</shortName>
    </alternativeName>
    <alternativeName>
        <fullName>Glucose-inhibited division protein B</fullName>
    </alternativeName>
</protein>
<gene>
    <name evidence="1" type="primary">rsmG</name>
    <name type="synonym">gidB</name>
    <name type="ordered locus">b3740</name>
    <name type="ordered locus">JW3718</name>
</gene>
<dbReference type="EC" id="2.1.1.170" evidence="1"/>
<dbReference type="EMBL" id="X01631">
    <property type="protein sequence ID" value="CAA25774.1"/>
    <property type="molecule type" value="Genomic_DNA"/>
</dbReference>
<dbReference type="EMBL" id="L10328">
    <property type="protein sequence ID" value="AAA62092.1"/>
    <property type="molecule type" value="Genomic_DNA"/>
</dbReference>
<dbReference type="EMBL" id="U00096">
    <property type="protein sequence ID" value="AAC76763.1"/>
    <property type="molecule type" value="Genomic_DNA"/>
</dbReference>
<dbReference type="EMBL" id="AP009048">
    <property type="protein sequence ID" value="BAE77548.1"/>
    <property type="molecule type" value="Genomic_DNA"/>
</dbReference>
<dbReference type="EMBL" id="X01383">
    <property type="protein sequence ID" value="CAA25639.1"/>
    <property type="molecule type" value="Genomic_DNA"/>
</dbReference>
<dbReference type="PIR" id="C30389">
    <property type="entry name" value="BVECQB"/>
</dbReference>
<dbReference type="RefSeq" id="NP_418196.1">
    <property type="nucleotide sequence ID" value="NC_000913.3"/>
</dbReference>
<dbReference type="RefSeq" id="WP_000932839.1">
    <property type="nucleotide sequence ID" value="NZ_STEB01000015.1"/>
</dbReference>
<dbReference type="PDB" id="1JSX">
    <property type="method" value="X-ray"/>
    <property type="resolution" value="2.40 A"/>
    <property type="chains" value="A=1-207"/>
</dbReference>
<dbReference type="PDBsum" id="1JSX"/>
<dbReference type="SMR" id="P0A6U5"/>
<dbReference type="BioGRID" id="4263261">
    <property type="interactions" value="260"/>
</dbReference>
<dbReference type="BioGRID" id="852552">
    <property type="interactions" value="1"/>
</dbReference>
<dbReference type="DIP" id="DIP-47992N"/>
<dbReference type="FunCoup" id="P0A6U5">
    <property type="interactions" value="616"/>
</dbReference>
<dbReference type="IntAct" id="P0A6U5">
    <property type="interactions" value="10"/>
</dbReference>
<dbReference type="STRING" id="511145.b3740"/>
<dbReference type="jPOST" id="P0A6U5"/>
<dbReference type="PaxDb" id="511145-b3740"/>
<dbReference type="EnsemblBacteria" id="AAC76763">
    <property type="protein sequence ID" value="AAC76763"/>
    <property type="gene ID" value="b3740"/>
</dbReference>
<dbReference type="GeneID" id="93778227"/>
<dbReference type="GeneID" id="948250"/>
<dbReference type="KEGG" id="ecj:JW3718"/>
<dbReference type="KEGG" id="eco:b3740"/>
<dbReference type="KEGG" id="ecoc:C3026_20265"/>
<dbReference type="PATRIC" id="fig|1411691.4.peg.2960"/>
<dbReference type="EchoBASE" id="EB0371"/>
<dbReference type="eggNOG" id="COG0357">
    <property type="taxonomic scope" value="Bacteria"/>
</dbReference>
<dbReference type="HOGENOM" id="CLU_065341_2_2_6"/>
<dbReference type="InParanoid" id="P0A6U5"/>
<dbReference type="OMA" id="AGMPNKK"/>
<dbReference type="OrthoDB" id="9808773at2"/>
<dbReference type="PhylomeDB" id="P0A6U5"/>
<dbReference type="BioCyc" id="EcoCyc:EG10376-MONOMER"/>
<dbReference type="BioCyc" id="MetaCyc:EG10376-MONOMER"/>
<dbReference type="BRENDA" id="2.1.1.170">
    <property type="organism ID" value="2026"/>
</dbReference>
<dbReference type="EvolutionaryTrace" id="P0A6U5"/>
<dbReference type="PRO" id="PR:P0A6U5"/>
<dbReference type="Proteomes" id="UP000000625">
    <property type="component" value="Chromosome"/>
</dbReference>
<dbReference type="GO" id="GO:0005829">
    <property type="term" value="C:cytosol"/>
    <property type="evidence" value="ECO:0000314"/>
    <property type="project" value="EcoCyc"/>
</dbReference>
<dbReference type="GO" id="GO:0070043">
    <property type="term" value="F:rRNA (guanine-N7-)-methyltransferase activity"/>
    <property type="evidence" value="ECO:0000314"/>
    <property type="project" value="EcoCyc"/>
</dbReference>
<dbReference type="GO" id="GO:0070475">
    <property type="term" value="P:rRNA base methylation"/>
    <property type="evidence" value="ECO:0000315"/>
    <property type="project" value="EcoCyc"/>
</dbReference>
<dbReference type="CDD" id="cd02440">
    <property type="entry name" value="AdoMet_MTases"/>
    <property type="match status" value="1"/>
</dbReference>
<dbReference type="FunFam" id="3.40.50.150:FF:000032">
    <property type="entry name" value="Ribosomal RNA small subunit methyltransferase G"/>
    <property type="match status" value="1"/>
</dbReference>
<dbReference type="Gene3D" id="3.40.50.150">
    <property type="entry name" value="Vaccinia Virus protein VP39"/>
    <property type="match status" value="1"/>
</dbReference>
<dbReference type="HAMAP" id="MF_00074">
    <property type="entry name" value="16SrRNA_methyltr_G"/>
    <property type="match status" value="1"/>
</dbReference>
<dbReference type="InterPro" id="IPR003682">
    <property type="entry name" value="rRNA_ssu_MeTfrase_G"/>
</dbReference>
<dbReference type="InterPro" id="IPR029063">
    <property type="entry name" value="SAM-dependent_MTases_sf"/>
</dbReference>
<dbReference type="NCBIfam" id="TIGR00138">
    <property type="entry name" value="rsmG_gidB"/>
    <property type="match status" value="1"/>
</dbReference>
<dbReference type="PANTHER" id="PTHR31760">
    <property type="entry name" value="S-ADENOSYL-L-METHIONINE-DEPENDENT METHYLTRANSFERASES SUPERFAMILY PROTEIN"/>
    <property type="match status" value="1"/>
</dbReference>
<dbReference type="PANTHER" id="PTHR31760:SF0">
    <property type="entry name" value="S-ADENOSYL-L-METHIONINE-DEPENDENT METHYLTRANSFERASES SUPERFAMILY PROTEIN"/>
    <property type="match status" value="1"/>
</dbReference>
<dbReference type="Pfam" id="PF02527">
    <property type="entry name" value="GidB"/>
    <property type="match status" value="1"/>
</dbReference>
<dbReference type="PIRSF" id="PIRSF003078">
    <property type="entry name" value="GidB"/>
    <property type="match status" value="1"/>
</dbReference>
<dbReference type="SUPFAM" id="SSF53335">
    <property type="entry name" value="S-adenosyl-L-methionine-dependent methyltransferases"/>
    <property type="match status" value="1"/>
</dbReference>
<sequence length="207" mass="23431">MLNKLSLLLKDAGISLTDHQKNQLIAYVNMLHKWNKAYNLTSVRDPNEMLVRHILDSIVVAPYLQGERFIDVGTGPGLPGIPLSIVRPEAHFTLLDSLGKRVRFLRQVQHELKLENIEPVQSRVEEFPSEPPFDGVISRAFASLNDMVSWCHHLPGEQGRFYALKGQMPEDEIALLPEEYQVESVVKLQVPALDGERHLVVIKANKI</sequence>
<keyword id="KW-0002">3D-structure</keyword>
<keyword id="KW-0963">Cytoplasm</keyword>
<keyword id="KW-0489">Methyltransferase</keyword>
<keyword id="KW-1185">Reference proteome</keyword>
<keyword id="KW-0698">rRNA processing</keyword>
<keyword id="KW-0949">S-adenosyl-L-methionine</keyword>
<keyword id="KW-0808">Transferase</keyword>
<organism>
    <name type="scientific">Escherichia coli (strain K12)</name>
    <dbReference type="NCBI Taxonomy" id="83333"/>
    <lineage>
        <taxon>Bacteria</taxon>
        <taxon>Pseudomonadati</taxon>
        <taxon>Pseudomonadota</taxon>
        <taxon>Gammaproteobacteria</taxon>
        <taxon>Enterobacterales</taxon>
        <taxon>Enterobacteriaceae</taxon>
        <taxon>Escherichia</taxon>
    </lineage>
</organism>
<feature type="chain" id="PRO_0000184249" description="Ribosomal RNA small subunit methyltransferase G">
    <location>
        <begin position="1"/>
        <end position="207"/>
    </location>
</feature>
<feature type="binding site" evidence="1">
    <location>
        <position position="73"/>
    </location>
    <ligand>
        <name>S-adenosyl-L-methionine</name>
        <dbReference type="ChEBI" id="CHEBI:59789"/>
    </ligand>
</feature>
<feature type="binding site" evidence="1">
    <location>
        <position position="78"/>
    </location>
    <ligand>
        <name>S-adenosyl-L-methionine</name>
        <dbReference type="ChEBI" id="CHEBI:59789"/>
    </ligand>
</feature>
<feature type="binding site" evidence="1">
    <location>
        <begin position="124"/>
        <end position="125"/>
    </location>
    <ligand>
        <name>S-adenosyl-L-methionine</name>
        <dbReference type="ChEBI" id="CHEBI:59789"/>
    </ligand>
</feature>
<feature type="binding site" evidence="1">
    <location>
        <position position="139"/>
    </location>
    <ligand>
        <name>S-adenosyl-L-methionine</name>
        <dbReference type="ChEBI" id="CHEBI:59789"/>
    </ligand>
</feature>
<feature type="mutagenesis site" description="Lack of activity. Low-level streptomycin resistance. Slight decrease in AdoMet affinity." evidence="4">
    <original>N</original>
    <variation>A</variation>
    <location>
        <position position="39"/>
    </location>
</feature>
<feature type="mutagenesis site" description="Decrease in activity. Very low-level streptomycin resistance. Slight decrease in AdoMet affinity." evidence="3">
    <original>H</original>
    <variation>A</variation>
    <location>
        <position position="53"/>
    </location>
</feature>
<feature type="mutagenesis site" description="Strong decrease in activity. Low-level streptomycin resistance. Slight decrease in AdoMet affinity." evidence="3">
    <original>D</original>
    <variation>A</variation>
    <location>
        <position position="56"/>
    </location>
</feature>
<feature type="mutagenesis site" description="Lack of activity. Low-level streptomycin resistance. 10-fold increase in AdoMet affinity." evidence="3">
    <original>D</original>
    <variation>A</variation>
    <location>
        <position position="71"/>
    </location>
</feature>
<feature type="mutagenesis site" description="Slight decrease in activity. Streptomycin-sensitive. Slight decrease in AdoMet affinity." evidence="3">
    <original>G</original>
    <variation>A</variation>
    <location>
        <position position="73"/>
    </location>
</feature>
<feature type="mutagenesis site" description="Lack of activity. Low-level streptomycin resistance. 24-fold decrease in AdoMet affinity." evidence="3">
    <original>G</original>
    <variation>A</variation>
    <location>
        <position position="75"/>
    </location>
</feature>
<feature type="mutagenesis site" description="Lack of activity. Low-level streptomycin resistance. 10-fold decrease in AdoMet affinity." evidence="3">
    <original>G</original>
    <variation>A</variation>
    <location>
        <position position="77"/>
    </location>
</feature>
<feature type="mutagenesis site" description="Lack of activity. Low-level streptomycin resistance. 11-fold decrease in AdoMet affinity." evidence="3">
    <original>P</original>
    <variation>A</variation>
    <location>
        <position position="79"/>
    </location>
</feature>
<feature type="mutagenesis site" description="Lack of activity. Low-level streptomycin resistance." evidence="3">
    <original>D</original>
    <variation>A</variation>
    <location>
        <position position="96"/>
    </location>
</feature>
<feature type="mutagenesis site" description="Lack of activity. Low-level streptomycin resistance." evidence="3">
    <original>KR</original>
    <variation>AA</variation>
    <location>
        <begin position="100"/>
        <end position="101"/>
    </location>
</feature>
<feature type="mutagenesis site" description="Slight decrease in activity. Streptomycin-sensitive." evidence="3">
    <original>R</original>
    <variation>A</variation>
    <location>
        <position position="123"/>
    </location>
</feature>
<feature type="mutagenesis site" description="Lack of activity. Low-level streptomycin resistance. No change in AdoMet affinity." evidence="3">
    <original>R</original>
    <variation>A</variation>
    <location>
        <position position="139"/>
    </location>
</feature>
<feature type="mutagenesis site" description="Decrease in activity. Very low-level streptomycin resistance." evidence="3">
    <original>R</original>
    <variation>K</variation>
    <location>
        <position position="139"/>
    </location>
</feature>
<feature type="mutagenesis site" description="Slight decrease in activity. Streptomycin-sensitive." evidence="3">
    <original>K</original>
    <variation>A</variation>
    <location>
        <position position="165"/>
    </location>
</feature>
<feature type="mutagenesis site" description="Strong decrease in activity. Low-level streptomycin resistance." evidence="3">
    <original>R</original>
    <variation>A</variation>
    <location>
        <position position="197"/>
    </location>
</feature>
<feature type="helix" evidence="6">
    <location>
        <begin position="2"/>
        <end position="10"/>
    </location>
</feature>
<feature type="turn" evidence="6">
    <location>
        <begin position="11"/>
        <end position="13"/>
    </location>
</feature>
<feature type="helix" evidence="6">
    <location>
        <begin position="18"/>
        <end position="34"/>
    </location>
</feature>
<feature type="helix" evidence="6">
    <location>
        <begin position="49"/>
        <end position="60"/>
    </location>
</feature>
<feature type="helix" evidence="6">
    <location>
        <begin position="61"/>
        <end position="63"/>
    </location>
</feature>
<feature type="strand" evidence="6">
    <location>
        <begin position="66"/>
        <end position="72"/>
    </location>
</feature>
<feature type="turn" evidence="6">
    <location>
        <begin position="75"/>
        <end position="79"/>
    </location>
</feature>
<feature type="helix" evidence="6">
    <location>
        <begin position="80"/>
        <end position="86"/>
    </location>
</feature>
<feature type="strand" evidence="6">
    <location>
        <begin position="90"/>
        <end position="97"/>
    </location>
</feature>
<feature type="helix" evidence="6">
    <location>
        <begin position="99"/>
        <end position="111"/>
    </location>
</feature>
<feature type="strand" evidence="6">
    <location>
        <begin position="115"/>
        <end position="121"/>
    </location>
</feature>
<feature type="turn" evidence="6">
    <location>
        <begin position="124"/>
        <end position="126"/>
    </location>
</feature>
<feature type="strand" evidence="6">
    <location>
        <begin position="133"/>
        <end position="137"/>
    </location>
</feature>
<feature type="strand" evidence="6">
    <location>
        <begin position="141"/>
        <end position="143"/>
    </location>
</feature>
<feature type="helix" evidence="6">
    <location>
        <begin position="144"/>
        <end position="151"/>
    </location>
</feature>
<feature type="strand" evidence="6">
    <location>
        <begin position="154"/>
        <end position="167"/>
    </location>
</feature>
<feature type="helix" evidence="6">
    <location>
        <begin position="170"/>
        <end position="174"/>
    </location>
</feature>
<feature type="strand" evidence="6">
    <location>
        <begin position="180"/>
        <end position="189"/>
    </location>
</feature>
<feature type="strand" evidence="6">
    <location>
        <begin position="196"/>
        <end position="204"/>
    </location>
</feature>
<proteinExistence type="evidence at protein level"/>
<accession>P0A6U5</accession>
<accession>P17113</accession>
<accession>Q2M858</accession>
<reference key="1">
    <citation type="journal article" date="1984" name="Biochem. J.">
        <title>DNA sequence around the Escherichia coli unc operon. Completion of the sequence of a 17 kilobase segment containing asnA, oriC, unc, glmS and phoS.</title>
        <authorList>
            <person name="Walker J.E."/>
            <person name="Gay N.J."/>
            <person name="Saraste M."/>
            <person name="Eberle A.N."/>
        </authorList>
    </citation>
    <scope>NUCLEOTIDE SEQUENCE [GENOMIC DNA]</scope>
</reference>
<reference key="2">
    <citation type="journal article" date="1993" name="Genomics">
        <title>DNA sequence and analysis of 136 kilobases of the Escherichia coli genome: organizational symmetry around the origin of replication.</title>
        <authorList>
            <person name="Burland V.D."/>
            <person name="Plunkett G. III"/>
            <person name="Daniels D.L."/>
            <person name="Blattner F.R."/>
        </authorList>
    </citation>
    <scope>NUCLEOTIDE SEQUENCE [LARGE SCALE GENOMIC DNA]</scope>
    <source>
        <strain>K12 / MG1655 / ATCC 47076</strain>
    </source>
</reference>
<reference key="3">
    <citation type="journal article" date="1997" name="Science">
        <title>The complete genome sequence of Escherichia coli K-12.</title>
        <authorList>
            <person name="Blattner F.R."/>
            <person name="Plunkett G. III"/>
            <person name="Bloch C.A."/>
            <person name="Perna N.T."/>
            <person name="Burland V."/>
            <person name="Riley M."/>
            <person name="Collado-Vides J."/>
            <person name="Glasner J.D."/>
            <person name="Rode C.K."/>
            <person name="Mayhew G.F."/>
            <person name="Gregor J."/>
            <person name="Davis N.W."/>
            <person name="Kirkpatrick H.A."/>
            <person name="Goeden M.A."/>
            <person name="Rose D.J."/>
            <person name="Mau B."/>
            <person name="Shao Y."/>
        </authorList>
    </citation>
    <scope>NUCLEOTIDE SEQUENCE [LARGE SCALE GENOMIC DNA]</scope>
    <source>
        <strain>K12 / MG1655 / ATCC 47076</strain>
    </source>
</reference>
<reference key="4">
    <citation type="journal article" date="2006" name="Mol. Syst. Biol.">
        <title>Highly accurate genome sequences of Escherichia coli K-12 strains MG1655 and W3110.</title>
        <authorList>
            <person name="Hayashi K."/>
            <person name="Morooka N."/>
            <person name="Yamamoto Y."/>
            <person name="Fujita K."/>
            <person name="Isono K."/>
            <person name="Choi S."/>
            <person name="Ohtsubo E."/>
            <person name="Baba T."/>
            <person name="Wanner B.L."/>
            <person name="Mori H."/>
            <person name="Horiuchi T."/>
        </authorList>
    </citation>
    <scope>NUCLEOTIDE SEQUENCE [LARGE SCALE GENOMIC DNA]</scope>
    <source>
        <strain>K12 / W3110 / ATCC 27325 / DSM 5911</strain>
    </source>
</reference>
<reference key="5">
    <citation type="journal article" date="1984" name="Mol. Gen. Genet.">
        <title>The promoters of the atp operon of Escherichia coli K12.</title>
        <authorList>
            <person name="Nielsen J."/>
            <person name="Joergensen B.B."/>
            <person name="von Meyenburg K."/>
            <person name="Hansen F.G."/>
        </authorList>
    </citation>
    <scope>NUCLEOTIDE SEQUENCE [GENOMIC DNA] OF 192-207</scope>
    <source>
        <strain>K12</strain>
    </source>
</reference>
<reference key="6">
    <citation type="journal article" date="2007" name="Mol. Microbiol.">
        <title>Loss of a conserved 7-methylguanosine modification in 16S rRNA confers low-level streptomycin resistance in bacteria.</title>
        <authorList>
            <person name="Okamoto S."/>
            <person name="Tamaru A."/>
            <person name="Nakajima C."/>
            <person name="Nishimura K."/>
            <person name="Tanaka Y."/>
            <person name="Tokuyama S."/>
            <person name="Suzuki Y."/>
            <person name="Ochi K."/>
        </authorList>
    </citation>
    <scope>FUNCTION</scope>
    <scope>CATALYTIC ACTIVITY</scope>
    <scope>DISRUPTION PHENOTYPE</scope>
    <source>
        <strain>K12</strain>
    </source>
</reference>
<reference key="7">
    <citation type="journal article" date="2012" name="RNA">
        <title>Regulation of expression and catalytic activity of Escherichia coli RsmG methyltransferase.</title>
        <authorList>
            <person name="Benitez-Paez A."/>
            <person name="Villarroya M."/>
            <person name="Armengod M.E."/>
        </authorList>
    </citation>
    <scope>INDUCTION</scope>
    <scope>MUTAGENESIS OF HIS-53; ASP-56; ASP-71; GLY-73; GLY-75; GLY-77; PRO-79; ASP-96; 100-LYS-ARG-101; ARG-123; ARG-139; LYS-165 AND ARG-197</scope>
</reference>
<reference key="8">
    <citation type="journal article" date="2014" name="Biomedica">
        <title>Impairing methylations at ribosome RNA, a point mutation-dependent strategy for aminoglycoside resistance: the rsmG case.</title>
        <authorList>
            <person name="Benitez-Paez A."/>
            <person name="Cardenas-Brito S."/>
            <person name="Corredor M."/>
            <person name="Villarroya M."/>
            <person name="Armengod M.E."/>
        </authorList>
    </citation>
    <scope>MUTAGENESIS OF ASN-39</scope>
</reference>
<reference key="9">
    <citation type="journal article" date="2002" name="Proteins">
        <title>Crystal structure of the Escherichia coli glucose-inhibited division protein B (GidB) reveals a methyltransferase fold.</title>
        <authorList>
            <person name="Romanowski M.J."/>
            <person name="Bonanno J.B."/>
            <person name="Burley S.K."/>
        </authorList>
    </citation>
    <scope>X-RAY CRYSTALLOGRAPHY (2.4 ANGSTROMS)</scope>
</reference>
<name>RSMG_ECOLI</name>
<evidence type="ECO:0000255" key="1">
    <source>
        <dbReference type="HAMAP-Rule" id="MF_00074"/>
    </source>
</evidence>
<evidence type="ECO:0000269" key="2">
    <source>
    </source>
</evidence>
<evidence type="ECO:0000269" key="3">
    <source>
    </source>
</evidence>
<evidence type="ECO:0000269" key="4">
    <source ref="8"/>
</evidence>
<evidence type="ECO:0000305" key="5">
    <source>
    </source>
</evidence>
<evidence type="ECO:0007829" key="6">
    <source>
        <dbReference type="PDB" id="1JSX"/>
    </source>
</evidence>
<comment type="function">
    <text evidence="1 2">Specifically methylates the N7 position of guanine in position 527 of 16S rRNA. Requires the intact 30S subunit for methylation.</text>
</comment>
<comment type="catalytic activity">
    <reaction evidence="1 2">
        <text>guanosine(527) in 16S rRNA + S-adenosyl-L-methionine = N(7)-methylguanosine(527) in 16S rRNA + S-adenosyl-L-homocysteine</text>
        <dbReference type="Rhea" id="RHEA:42732"/>
        <dbReference type="Rhea" id="RHEA-COMP:10209"/>
        <dbReference type="Rhea" id="RHEA-COMP:10210"/>
        <dbReference type="ChEBI" id="CHEBI:57856"/>
        <dbReference type="ChEBI" id="CHEBI:59789"/>
        <dbReference type="ChEBI" id="CHEBI:74269"/>
        <dbReference type="ChEBI" id="CHEBI:74480"/>
        <dbReference type="EC" id="2.1.1.170"/>
    </reaction>
</comment>
<comment type="subcellular location">
    <subcellularLocation>
        <location evidence="1">Cytoplasm</location>
    </subcellularLocation>
</comment>
<comment type="induction">
    <text evidence="3">Induced under stress conditions known to stimulate ppGpp accumulation and down-regulate rRNA synthesis.</text>
</comment>
<comment type="disruption phenotype">
    <text evidence="2">Low-level streptomycin resistance.</text>
</comment>
<comment type="miscellaneous">
    <text evidence="5">Mechanisms acting on transcription regulation, translation or protein stability could be responsible for adjusting RsmG expression to rRNA synthesis.</text>
</comment>
<comment type="similarity">
    <text evidence="1">Belongs to the methyltransferase superfamily. RNA methyltransferase RsmG family.</text>
</comment>